<feature type="chain" id="PRO_0000137051" description="Nucleoside diphosphate kinase">
    <location>
        <begin position="1"/>
        <end position="149"/>
    </location>
</feature>
<feature type="active site" description="Pros-phosphohistidine intermediate" evidence="1">
    <location>
        <position position="115"/>
    </location>
</feature>
<feature type="binding site" evidence="1">
    <location>
        <position position="9"/>
    </location>
    <ligand>
        <name>ATP</name>
        <dbReference type="ChEBI" id="CHEBI:30616"/>
    </ligand>
</feature>
<feature type="binding site" evidence="1">
    <location>
        <position position="57"/>
    </location>
    <ligand>
        <name>ATP</name>
        <dbReference type="ChEBI" id="CHEBI:30616"/>
    </ligand>
</feature>
<feature type="binding site" evidence="1">
    <location>
        <position position="85"/>
    </location>
    <ligand>
        <name>ATP</name>
        <dbReference type="ChEBI" id="CHEBI:30616"/>
    </ligand>
</feature>
<feature type="binding site" evidence="1">
    <location>
        <position position="91"/>
    </location>
    <ligand>
        <name>ATP</name>
        <dbReference type="ChEBI" id="CHEBI:30616"/>
    </ligand>
</feature>
<feature type="binding site" evidence="1">
    <location>
        <position position="102"/>
    </location>
    <ligand>
        <name>ATP</name>
        <dbReference type="ChEBI" id="CHEBI:30616"/>
    </ligand>
</feature>
<feature type="binding site" evidence="1">
    <location>
        <position position="112"/>
    </location>
    <ligand>
        <name>ATP</name>
        <dbReference type="ChEBI" id="CHEBI:30616"/>
    </ligand>
</feature>
<accession>Q8CSI0</accession>
<name>NDK_STAES</name>
<reference key="1">
    <citation type="journal article" date="2003" name="Mol. Microbiol.">
        <title>Genome-based analysis of virulence genes in a non-biofilm-forming Staphylococcus epidermidis strain (ATCC 12228).</title>
        <authorList>
            <person name="Zhang Y.-Q."/>
            <person name="Ren S.-X."/>
            <person name="Li H.-L."/>
            <person name="Wang Y.-X."/>
            <person name="Fu G."/>
            <person name="Yang J."/>
            <person name="Qin Z.-Q."/>
            <person name="Miao Y.-G."/>
            <person name="Wang W.-Y."/>
            <person name="Chen R.-S."/>
            <person name="Shen Y."/>
            <person name="Chen Z."/>
            <person name="Yuan Z.-H."/>
            <person name="Zhao G.-P."/>
            <person name="Qu D."/>
            <person name="Danchin A."/>
            <person name="Wen Y.-M."/>
        </authorList>
    </citation>
    <scope>NUCLEOTIDE SEQUENCE [LARGE SCALE GENOMIC DNA]</scope>
    <source>
        <strain>ATCC 12228 / FDA PCI 1200</strain>
    </source>
</reference>
<sequence>MERTFLMIKPDAVQRNLIGEIISRIEKKGLKLVGGKFMQVPMELAEKHYSEHEGKPFYDKLISFITSAPVFAMVVEGENAVAVSRKIIGSTNPSEAAPGTIRGDYGLNLGRNIIHGSDSTESAQREVKLWFTSSEIADYKEPREDWLYE</sequence>
<gene>
    <name evidence="1" type="primary">ndk</name>
    <name type="ordered locus">SE_1156</name>
</gene>
<keyword id="KW-0067">ATP-binding</keyword>
<keyword id="KW-0963">Cytoplasm</keyword>
<keyword id="KW-0418">Kinase</keyword>
<keyword id="KW-0460">Magnesium</keyword>
<keyword id="KW-0479">Metal-binding</keyword>
<keyword id="KW-0546">Nucleotide metabolism</keyword>
<keyword id="KW-0547">Nucleotide-binding</keyword>
<keyword id="KW-0597">Phosphoprotein</keyword>
<keyword id="KW-0808">Transferase</keyword>
<evidence type="ECO:0000255" key="1">
    <source>
        <dbReference type="HAMAP-Rule" id="MF_00451"/>
    </source>
</evidence>
<evidence type="ECO:0000305" key="2"/>
<organism>
    <name type="scientific">Staphylococcus epidermidis (strain ATCC 12228 / FDA PCI 1200)</name>
    <dbReference type="NCBI Taxonomy" id="176280"/>
    <lineage>
        <taxon>Bacteria</taxon>
        <taxon>Bacillati</taxon>
        <taxon>Bacillota</taxon>
        <taxon>Bacilli</taxon>
        <taxon>Bacillales</taxon>
        <taxon>Staphylococcaceae</taxon>
        <taxon>Staphylococcus</taxon>
    </lineage>
</organism>
<dbReference type="EC" id="2.7.4.6" evidence="1"/>
<dbReference type="EMBL" id="AE015929">
    <property type="protein sequence ID" value="AAO04753.1"/>
    <property type="status" value="ALT_INIT"/>
    <property type="molecule type" value="Genomic_DNA"/>
</dbReference>
<dbReference type="RefSeq" id="NP_764711.1">
    <property type="nucleotide sequence ID" value="NC_004461.1"/>
</dbReference>
<dbReference type="RefSeq" id="WP_001831235.1">
    <property type="nucleotide sequence ID" value="NZ_WBME01000006.1"/>
</dbReference>
<dbReference type="SMR" id="Q8CSI0"/>
<dbReference type="GeneID" id="50018722"/>
<dbReference type="KEGG" id="sep:SE_1156"/>
<dbReference type="PATRIC" id="fig|176280.10.peg.1128"/>
<dbReference type="eggNOG" id="COG0105">
    <property type="taxonomic scope" value="Bacteria"/>
</dbReference>
<dbReference type="HOGENOM" id="CLU_060216_6_3_9"/>
<dbReference type="OrthoDB" id="9801161at2"/>
<dbReference type="Proteomes" id="UP000001411">
    <property type="component" value="Chromosome"/>
</dbReference>
<dbReference type="GO" id="GO:0005737">
    <property type="term" value="C:cytoplasm"/>
    <property type="evidence" value="ECO:0007669"/>
    <property type="project" value="UniProtKB-SubCell"/>
</dbReference>
<dbReference type="GO" id="GO:0005524">
    <property type="term" value="F:ATP binding"/>
    <property type="evidence" value="ECO:0007669"/>
    <property type="project" value="UniProtKB-UniRule"/>
</dbReference>
<dbReference type="GO" id="GO:0046872">
    <property type="term" value="F:metal ion binding"/>
    <property type="evidence" value="ECO:0007669"/>
    <property type="project" value="UniProtKB-KW"/>
</dbReference>
<dbReference type="GO" id="GO:0004550">
    <property type="term" value="F:nucleoside diphosphate kinase activity"/>
    <property type="evidence" value="ECO:0007669"/>
    <property type="project" value="UniProtKB-UniRule"/>
</dbReference>
<dbReference type="GO" id="GO:0006241">
    <property type="term" value="P:CTP biosynthetic process"/>
    <property type="evidence" value="ECO:0007669"/>
    <property type="project" value="UniProtKB-UniRule"/>
</dbReference>
<dbReference type="GO" id="GO:0006183">
    <property type="term" value="P:GTP biosynthetic process"/>
    <property type="evidence" value="ECO:0007669"/>
    <property type="project" value="UniProtKB-UniRule"/>
</dbReference>
<dbReference type="GO" id="GO:0006228">
    <property type="term" value="P:UTP biosynthetic process"/>
    <property type="evidence" value="ECO:0007669"/>
    <property type="project" value="UniProtKB-UniRule"/>
</dbReference>
<dbReference type="CDD" id="cd04413">
    <property type="entry name" value="NDPk_I"/>
    <property type="match status" value="1"/>
</dbReference>
<dbReference type="FunFam" id="3.30.70.141:FF:000002">
    <property type="entry name" value="Nucleoside diphosphate kinase"/>
    <property type="match status" value="1"/>
</dbReference>
<dbReference type="Gene3D" id="3.30.70.141">
    <property type="entry name" value="Nucleoside diphosphate kinase-like domain"/>
    <property type="match status" value="1"/>
</dbReference>
<dbReference type="HAMAP" id="MF_00451">
    <property type="entry name" value="NDP_kinase"/>
    <property type="match status" value="1"/>
</dbReference>
<dbReference type="InterPro" id="IPR034907">
    <property type="entry name" value="NDK-like_dom"/>
</dbReference>
<dbReference type="InterPro" id="IPR036850">
    <property type="entry name" value="NDK-like_dom_sf"/>
</dbReference>
<dbReference type="InterPro" id="IPR001564">
    <property type="entry name" value="Nucleoside_diP_kinase"/>
</dbReference>
<dbReference type="NCBIfam" id="NF001908">
    <property type="entry name" value="PRK00668.1"/>
    <property type="match status" value="1"/>
</dbReference>
<dbReference type="PANTHER" id="PTHR11349">
    <property type="entry name" value="NUCLEOSIDE DIPHOSPHATE KINASE"/>
    <property type="match status" value="1"/>
</dbReference>
<dbReference type="Pfam" id="PF00334">
    <property type="entry name" value="NDK"/>
    <property type="match status" value="1"/>
</dbReference>
<dbReference type="PRINTS" id="PR01243">
    <property type="entry name" value="NUCDPKINASE"/>
</dbReference>
<dbReference type="SMART" id="SM00562">
    <property type="entry name" value="NDK"/>
    <property type="match status" value="1"/>
</dbReference>
<dbReference type="SUPFAM" id="SSF54919">
    <property type="entry name" value="Nucleoside diphosphate kinase, NDK"/>
    <property type="match status" value="1"/>
</dbReference>
<dbReference type="PROSITE" id="PS51374">
    <property type="entry name" value="NDPK_LIKE"/>
    <property type="match status" value="1"/>
</dbReference>
<proteinExistence type="inferred from homology"/>
<comment type="function">
    <text evidence="1">Major role in the synthesis of nucleoside triphosphates other than ATP. The ATP gamma phosphate is transferred to the NDP beta phosphate via a ping-pong mechanism, using a phosphorylated active-site intermediate.</text>
</comment>
<comment type="catalytic activity">
    <reaction evidence="1">
        <text>a 2'-deoxyribonucleoside 5'-diphosphate + ATP = a 2'-deoxyribonucleoside 5'-triphosphate + ADP</text>
        <dbReference type="Rhea" id="RHEA:44640"/>
        <dbReference type="ChEBI" id="CHEBI:30616"/>
        <dbReference type="ChEBI" id="CHEBI:61560"/>
        <dbReference type="ChEBI" id="CHEBI:73316"/>
        <dbReference type="ChEBI" id="CHEBI:456216"/>
        <dbReference type="EC" id="2.7.4.6"/>
    </reaction>
</comment>
<comment type="catalytic activity">
    <reaction evidence="1">
        <text>a ribonucleoside 5'-diphosphate + ATP = a ribonucleoside 5'-triphosphate + ADP</text>
        <dbReference type="Rhea" id="RHEA:18113"/>
        <dbReference type="ChEBI" id="CHEBI:30616"/>
        <dbReference type="ChEBI" id="CHEBI:57930"/>
        <dbReference type="ChEBI" id="CHEBI:61557"/>
        <dbReference type="ChEBI" id="CHEBI:456216"/>
        <dbReference type="EC" id="2.7.4.6"/>
    </reaction>
</comment>
<comment type="cofactor">
    <cofactor evidence="1">
        <name>Mg(2+)</name>
        <dbReference type="ChEBI" id="CHEBI:18420"/>
    </cofactor>
</comment>
<comment type="subunit">
    <text evidence="1">Homotetramer.</text>
</comment>
<comment type="subcellular location">
    <subcellularLocation>
        <location evidence="1">Cytoplasm</location>
    </subcellularLocation>
</comment>
<comment type="similarity">
    <text evidence="1">Belongs to the NDK family.</text>
</comment>
<comment type="sequence caution" evidence="2">
    <conflict type="erroneous initiation">
        <sequence resource="EMBL-CDS" id="AAO04753"/>
    </conflict>
</comment>
<protein>
    <recommendedName>
        <fullName evidence="1">Nucleoside diphosphate kinase</fullName>
        <shortName evidence="1">NDK</shortName>
        <shortName evidence="1">NDP kinase</shortName>
        <ecNumber evidence="1">2.7.4.6</ecNumber>
    </recommendedName>
    <alternativeName>
        <fullName evidence="1">Nucleoside-2-P kinase</fullName>
    </alternativeName>
</protein>